<organism>
    <name type="scientific">Kluyveromyces lactis (strain ATCC 8585 / CBS 2359 / DSM 70799 / NBRC 1267 / NRRL Y-1140 / WM37)</name>
    <name type="common">Yeast</name>
    <name type="synonym">Candida sphaerica</name>
    <dbReference type="NCBI Taxonomy" id="284590"/>
    <lineage>
        <taxon>Eukaryota</taxon>
        <taxon>Fungi</taxon>
        <taxon>Dikarya</taxon>
        <taxon>Ascomycota</taxon>
        <taxon>Saccharomycotina</taxon>
        <taxon>Saccharomycetes</taxon>
        <taxon>Saccharomycetales</taxon>
        <taxon>Saccharomycetaceae</taxon>
        <taxon>Kluyveromyces</taxon>
    </lineage>
</organism>
<proteinExistence type="inferred from homology"/>
<name>GPA1_KLULA</name>
<accession>Q9Y7B7</accession>
<accession>Q6CIK5</accession>
<protein>
    <recommendedName>
        <fullName>Guanine nucleotide-binding protein alpha-1 subunit</fullName>
    </recommendedName>
    <alternativeName>
        <fullName>GP1-alpha</fullName>
    </alternativeName>
</protein>
<feature type="initiator methionine" description="Removed" evidence="1">
    <location>
        <position position="1"/>
    </location>
</feature>
<feature type="chain" id="PRO_0000203602" description="Guanine nucleotide-binding protein alpha-1 subunit">
    <location>
        <begin position="2"/>
        <end position="447"/>
    </location>
</feature>
<feature type="domain" description="G-alpha" evidence="4">
    <location>
        <begin position="40"/>
        <end position="447"/>
    </location>
</feature>
<feature type="region of interest" description="G1 motif" evidence="4">
    <location>
        <begin position="43"/>
        <end position="56"/>
    </location>
</feature>
<feature type="region of interest" description="G2 motif" evidence="4">
    <location>
        <begin position="267"/>
        <end position="275"/>
    </location>
</feature>
<feature type="region of interest" description="G3 motif" evidence="4">
    <location>
        <begin position="290"/>
        <end position="299"/>
    </location>
</feature>
<feature type="region of interest" description="G4 motif" evidence="4">
    <location>
        <begin position="359"/>
        <end position="366"/>
    </location>
</feature>
<feature type="region of interest" description="G5 motif" evidence="4">
    <location>
        <begin position="417"/>
        <end position="422"/>
    </location>
</feature>
<feature type="binding site" evidence="3">
    <location>
        <position position="51"/>
    </location>
    <ligand>
        <name>GTP</name>
        <dbReference type="ChEBI" id="CHEBI:37565"/>
    </ligand>
</feature>
<feature type="binding site" evidence="3">
    <location>
        <position position="52"/>
    </location>
    <ligand>
        <name>GTP</name>
        <dbReference type="ChEBI" id="CHEBI:37565"/>
    </ligand>
</feature>
<feature type="binding site" evidence="3">
    <location>
        <position position="53"/>
    </location>
    <ligand>
        <name>GTP</name>
        <dbReference type="ChEBI" id="CHEBI:37565"/>
    </ligand>
</feature>
<feature type="binding site" evidence="3">
    <location>
        <position position="54"/>
    </location>
    <ligand>
        <name>GTP</name>
        <dbReference type="ChEBI" id="CHEBI:37565"/>
    </ligand>
</feature>
<feature type="binding site" evidence="3">
    <location>
        <position position="55"/>
    </location>
    <ligand>
        <name>GTP</name>
        <dbReference type="ChEBI" id="CHEBI:37565"/>
    </ligand>
</feature>
<feature type="binding site" evidence="3">
    <location>
        <position position="55"/>
    </location>
    <ligand>
        <name>Mg(2+)</name>
        <dbReference type="ChEBI" id="CHEBI:18420"/>
    </ligand>
</feature>
<feature type="binding site" evidence="3">
    <location>
        <position position="56"/>
    </location>
    <ligand>
        <name>GTP</name>
        <dbReference type="ChEBI" id="CHEBI:37565"/>
    </ligand>
</feature>
<feature type="binding site" evidence="3">
    <location>
        <position position="269"/>
    </location>
    <ligand>
        <name>GTP</name>
        <dbReference type="ChEBI" id="CHEBI:37565"/>
    </ligand>
</feature>
<feature type="binding site" evidence="3">
    <location>
        <position position="275"/>
    </location>
    <ligand>
        <name>GTP</name>
        <dbReference type="ChEBI" id="CHEBI:37565"/>
    </ligand>
</feature>
<feature type="binding site" evidence="3">
    <location>
        <position position="275"/>
    </location>
    <ligand>
        <name>Mg(2+)</name>
        <dbReference type="ChEBI" id="CHEBI:18420"/>
    </ligand>
</feature>
<feature type="binding site" evidence="3">
    <location>
        <position position="297"/>
    </location>
    <ligand>
        <name>GTP</name>
        <dbReference type="ChEBI" id="CHEBI:37565"/>
    </ligand>
</feature>
<feature type="binding site" evidence="3">
    <location>
        <position position="363"/>
    </location>
    <ligand>
        <name>GTP</name>
        <dbReference type="ChEBI" id="CHEBI:37565"/>
    </ligand>
</feature>
<feature type="binding site" evidence="3">
    <location>
        <position position="364"/>
    </location>
    <ligand>
        <name>GTP</name>
        <dbReference type="ChEBI" id="CHEBI:37565"/>
    </ligand>
</feature>
<feature type="binding site" evidence="3">
    <location>
        <position position="366"/>
    </location>
    <ligand>
        <name>GTP</name>
        <dbReference type="ChEBI" id="CHEBI:37565"/>
    </ligand>
</feature>
<feature type="binding site" evidence="3">
    <location>
        <position position="419"/>
    </location>
    <ligand>
        <name>GTP</name>
        <dbReference type="ChEBI" id="CHEBI:37565"/>
    </ligand>
</feature>
<feature type="lipid moiety-binding region" description="N-myristoyl glycine" evidence="2">
    <location>
        <position position="2"/>
    </location>
</feature>
<feature type="lipid moiety-binding region" description="S-palmitoyl cysteine" evidence="2">
    <location>
        <position position="3"/>
    </location>
</feature>
<feature type="sequence conflict" description="In Ref. 1; AAD33674." evidence="5" ref="1">
    <original>G</original>
    <variation>V</variation>
    <location>
        <position position="271"/>
    </location>
</feature>
<comment type="function">
    <text>Guanine nucleotide-binding proteins (G proteins) are involved as modulators or transducers in various transmembrane signaling systems. This protein is involved in the mating response pathway.</text>
</comment>
<comment type="cofactor">
    <cofactor evidence="3">
        <name>Mg(2+)</name>
        <dbReference type="ChEBI" id="CHEBI:18420"/>
    </cofactor>
</comment>
<comment type="subunit">
    <text>G proteins are composed of 3 units; alpha, beta and gamma. The alpha chain contains the guanine nucleotide binding site.</text>
</comment>
<comment type="similarity">
    <text evidence="5">Belongs to the G-alpha family.</text>
</comment>
<evidence type="ECO:0000250" key="1"/>
<evidence type="ECO:0000250" key="2">
    <source>
        <dbReference type="UniProtKB" id="P08539"/>
    </source>
</evidence>
<evidence type="ECO:0000250" key="3">
    <source>
        <dbReference type="UniProtKB" id="P18064"/>
    </source>
</evidence>
<evidence type="ECO:0000255" key="4">
    <source>
        <dbReference type="PROSITE-ProRule" id="PRU01230"/>
    </source>
</evidence>
<evidence type="ECO:0000305" key="5"/>
<dbReference type="EMBL" id="AF135552">
    <property type="protein sequence ID" value="AAD33674.1"/>
    <property type="molecule type" value="Genomic_DNA"/>
</dbReference>
<dbReference type="EMBL" id="CR382126">
    <property type="protein sequence ID" value="CAG98942.1"/>
    <property type="molecule type" value="Genomic_DNA"/>
</dbReference>
<dbReference type="RefSeq" id="XP_456234.1">
    <property type="nucleotide sequence ID" value="XM_456234.1"/>
</dbReference>
<dbReference type="SMR" id="Q9Y7B7"/>
<dbReference type="FunCoup" id="Q9Y7B7">
    <property type="interactions" value="565"/>
</dbReference>
<dbReference type="STRING" id="284590.Q9Y7B7"/>
<dbReference type="PaxDb" id="284590-Q9Y7B7"/>
<dbReference type="KEGG" id="kla:KLLA0_F25916g"/>
<dbReference type="eggNOG" id="KOG0082">
    <property type="taxonomic scope" value="Eukaryota"/>
</dbReference>
<dbReference type="HOGENOM" id="CLU_014184_2_0_1"/>
<dbReference type="InParanoid" id="Q9Y7B7"/>
<dbReference type="OMA" id="QVIWADA"/>
<dbReference type="Proteomes" id="UP000000598">
    <property type="component" value="Chromosome F"/>
</dbReference>
<dbReference type="GO" id="GO:0005737">
    <property type="term" value="C:cytoplasm"/>
    <property type="evidence" value="ECO:0007669"/>
    <property type="project" value="TreeGrafter"/>
</dbReference>
<dbReference type="GO" id="GO:0005834">
    <property type="term" value="C:heterotrimeric G-protein complex"/>
    <property type="evidence" value="ECO:0007669"/>
    <property type="project" value="InterPro"/>
</dbReference>
<dbReference type="GO" id="GO:0001664">
    <property type="term" value="F:G protein-coupled receptor binding"/>
    <property type="evidence" value="ECO:0007669"/>
    <property type="project" value="InterPro"/>
</dbReference>
<dbReference type="GO" id="GO:0031683">
    <property type="term" value="F:G-protein beta/gamma-subunit complex binding"/>
    <property type="evidence" value="ECO:0007669"/>
    <property type="project" value="InterPro"/>
</dbReference>
<dbReference type="GO" id="GO:0005525">
    <property type="term" value="F:GTP binding"/>
    <property type="evidence" value="ECO:0007669"/>
    <property type="project" value="UniProtKB-KW"/>
</dbReference>
<dbReference type="GO" id="GO:0003924">
    <property type="term" value="F:GTPase activity"/>
    <property type="evidence" value="ECO:0007669"/>
    <property type="project" value="InterPro"/>
</dbReference>
<dbReference type="GO" id="GO:0046872">
    <property type="term" value="F:metal ion binding"/>
    <property type="evidence" value="ECO:0007669"/>
    <property type="project" value="UniProtKB-KW"/>
</dbReference>
<dbReference type="GO" id="GO:0007186">
    <property type="term" value="P:G protein-coupled receptor signaling pathway"/>
    <property type="evidence" value="ECO:0007669"/>
    <property type="project" value="InterPro"/>
</dbReference>
<dbReference type="GO" id="GO:0000750">
    <property type="term" value="P:pheromone-dependent signal transduction involved in conjugation with cellular fusion"/>
    <property type="evidence" value="ECO:0007669"/>
    <property type="project" value="TreeGrafter"/>
</dbReference>
<dbReference type="CDD" id="cd00066">
    <property type="entry name" value="G-alpha"/>
    <property type="match status" value="1"/>
</dbReference>
<dbReference type="FunFam" id="1.10.400.10:FF:000015">
    <property type="entry name" value="G protein alpha subunit"/>
    <property type="match status" value="1"/>
</dbReference>
<dbReference type="FunFam" id="3.40.50.300:FF:000563">
    <property type="entry name" value="Guanine nucleotide-binding protein alpha subunit"/>
    <property type="match status" value="1"/>
</dbReference>
<dbReference type="FunFam" id="3.40.50.300:FF:000692">
    <property type="entry name" value="Guanine nucleotide-binding protein subunit alpha"/>
    <property type="match status" value="1"/>
</dbReference>
<dbReference type="Gene3D" id="3.40.50.300">
    <property type="entry name" value="P-loop containing nucleotide triphosphate hydrolases"/>
    <property type="match status" value="2"/>
</dbReference>
<dbReference type="InterPro" id="IPR002975">
    <property type="entry name" value="Fungi_Gprotein_alpha"/>
</dbReference>
<dbReference type="InterPro" id="IPR001019">
    <property type="entry name" value="Gprotein_alpha_su"/>
</dbReference>
<dbReference type="InterPro" id="IPR011025">
    <property type="entry name" value="GproteinA_insert"/>
</dbReference>
<dbReference type="InterPro" id="IPR027417">
    <property type="entry name" value="P-loop_NTPase"/>
</dbReference>
<dbReference type="PANTHER" id="PTHR10218">
    <property type="entry name" value="GTP-BINDING PROTEIN ALPHA SUBUNIT"/>
    <property type="match status" value="1"/>
</dbReference>
<dbReference type="PANTHER" id="PTHR10218:SF302">
    <property type="entry name" value="GUANINE NUCLEOTIDE-BINDING PROTEIN ALPHA-5 SUBUNIT"/>
    <property type="match status" value="1"/>
</dbReference>
<dbReference type="Pfam" id="PF00503">
    <property type="entry name" value="G-alpha"/>
    <property type="match status" value="1"/>
</dbReference>
<dbReference type="PRINTS" id="PR00318">
    <property type="entry name" value="GPROTEINA"/>
</dbReference>
<dbReference type="PRINTS" id="PR01241">
    <property type="entry name" value="GPROTEINAFNG"/>
</dbReference>
<dbReference type="SMART" id="SM00275">
    <property type="entry name" value="G_alpha"/>
    <property type="match status" value="1"/>
</dbReference>
<dbReference type="SUPFAM" id="SSF52540">
    <property type="entry name" value="P-loop containing nucleoside triphosphate hydrolases"/>
    <property type="match status" value="1"/>
</dbReference>
<dbReference type="SUPFAM" id="SSF47895">
    <property type="entry name" value="Transducin (alpha subunit), insertion domain"/>
    <property type="match status" value="1"/>
</dbReference>
<dbReference type="PROSITE" id="PS51882">
    <property type="entry name" value="G_ALPHA"/>
    <property type="match status" value="1"/>
</dbReference>
<keyword id="KW-0342">GTP-binding</keyword>
<keyword id="KW-0378">Hydrolase</keyword>
<keyword id="KW-0449">Lipoprotein</keyword>
<keyword id="KW-0460">Magnesium</keyword>
<keyword id="KW-0479">Metal-binding</keyword>
<keyword id="KW-0519">Myristate</keyword>
<keyword id="KW-0547">Nucleotide-binding</keyword>
<keyword id="KW-0564">Palmitate</keyword>
<keyword id="KW-0589">Pheromone response</keyword>
<keyword id="KW-1185">Reference proteome</keyword>
<keyword id="KW-0807">Transducer</keyword>
<reference key="1">
    <citation type="journal article" date="2001" name="J. Bacteriol.">
        <title>The KlGpa1 gene encodes a G-protein alpha subunit that is a positive control element in the mating pathway of the budding yeast Kluyveromyces lactis.</title>
        <authorList>
            <person name="Savinon-Tejeda A.L."/>
            <person name="Ongay-Larios L."/>
            <person name="Valdes-Rodriguez J."/>
            <person name="Coria R."/>
        </authorList>
    </citation>
    <scope>NUCLEOTIDE SEQUENCE [GENOMIC DNA]</scope>
    <source>
        <strain>ATCC 8585 / CBS 2359 / DSM 70799 / NBRC 1267 / NRRL Y-1140 / WM37</strain>
    </source>
</reference>
<reference key="2">
    <citation type="journal article" date="2004" name="Nature">
        <title>Genome evolution in yeasts.</title>
        <authorList>
            <person name="Dujon B."/>
            <person name="Sherman D."/>
            <person name="Fischer G."/>
            <person name="Durrens P."/>
            <person name="Casaregola S."/>
            <person name="Lafontaine I."/>
            <person name="de Montigny J."/>
            <person name="Marck C."/>
            <person name="Neuveglise C."/>
            <person name="Talla E."/>
            <person name="Goffard N."/>
            <person name="Frangeul L."/>
            <person name="Aigle M."/>
            <person name="Anthouard V."/>
            <person name="Babour A."/>
            <person name="Barbe V."/>
            <person name="Barnay S."/>
            <person name="Blanchin S."/>
            <person name="Beckerich J.-M."/>
            <person name="Beyne E."/>
            <person name="Bleykasten C."/>
            <person name="Boisrame A."/>
            <person name="Boyer J."/>
            <person name="Cattolico L."/>
            <person name="Confanioleri F."/>
            <person name="de Daruvar A."/>
            <person name="Despons L."/>
            <person name="Fabre E."/>
            <person name="Fairhead C."/>
            <person name="Ferry-Dumazet H."/>
            <person name="Groppi A."/>
            <person name="Hantraye F."/>
            <person name="Hennequin C."/>
            <person name="Jauniaux N."/>
            <person name="Joyet P."/>
            <person name="Kachouri R."/>
            <person name="Kerrest A."/>
            <person name="Koszul R."/>
            <person name="Lemaire M."/>
            <person name="Lesur I."/>
            <person name="Ma L."/>
            <person name="Muller H."/>
            <person name="Nicaud J.-M."/>
            <person name="Nikolski M."/>
            <person name="Oztas S."/>
            <person name="Ozier-Kalogeropoulos O."/>
            <person name="Pellenz S."/>
            <person name="Potier S."/>
            <person name="Richard G.-F."/>
            <person name="Straub M.-L."/>
            <person name="Suleau A."/>
            <person name="Swennen D."/>
            <person name="Tekaia F."/>
            <person name="Wesolowski-Louvel M."/>
            <person name="Westhof E."/>
            <person name="Wirth B."/>
            <person name="Zeniou-Meyer M."/>
            <person name="Zivanovic Y."/>
            <person name="Bolotin-Fukuhara M."/>
            <person name="Thierry A."/>
            <person name="Bouchier C."/>
            <person name="Caudron B."/>
            <person name="Scarpelli C."/>
            <person name="Gaillardin C."/>
            <person name="Weissenbach J."/>
            <person name="Wincker P."/>
            <person name="Souciet J.-L."/>
        </authorList>
    </citation>
    <scope>NUCLEOTIDE SEQUENCE [LARGE SCALE GENOMIC DNA]</scope>
    <source>
        <strain>ATCC 8585 / CBS 2359 / DSM 70799 / NBRC 1267 / NRRL Y-1140 / WM37</strain>
    </source>
</reference>
<sequence>MGCVASTGNYENEDDPFIQNKRANDLIEQNLQQERNKNKNEVKLLLLGAGESGKSTVLKQMKLLHQGGFTHRERMQYGQVIWADAIESMRTLILQAGKLGIELDSDLKNAHSGQLVNTELHQCKEKIFRANTLDQIDARMAGGSEFLNEYVLKYNGIGSKKKRQTTLGFKESNGADPEEEDETDAFLSEKLAGTSYTGSSETSELKRIDQSTNEEIAYAIKKLWTQDKGIRQCFNRSSEFQLEGSASYYFDNIEKFARVDYVCDDMDILKGRIKTTGITENSFKIGPSTFKVYDAGGQRSERRKWIHCFEGITAVVFVIAISEYDQMLFEDERVNRMHESIVLLDTLLNSRWFANTPFILFLNKVDIFQEKVKRSPIRTWFPNYPGKLGDSETGLKYFESLFLSLNRSNKPIYVHRTCATDTQSMRFVLGAVTDLVIQQNLKKSGIL</sequence>
<gene>
    <name type="primary">GPA1</name>
    <name type="ordered locus">KLLA0F25916g</name>
</gene>